<organism>
    <name type="scientific">Delftia acidovorans (strain DSM 14801 / SPH-1)</name>
    <dbReference type="NCBI Taxonomy" id="398578"/>
    <lineage>
        <taxon>Bacteria</taxon>
        <taxon>Pseudomonadati</taxon>
        <taxon>Pseudomonadota</taxon>
        <taxon>Betaproteobacteria</taxon>
        <taxon>Burkholderiales</taxon>
        <taxon>Comamonadaceae</taxon>
        <taxon>Delftia</taxon>
    </lineage>
</organism>
<protein>
    <recommendedName>
        <fullName evidence="1">Small ribosomal subunit protein bS21</fullName>
    </recommendedName>
    <alternativeName>
        <fullName evidence="2">30S ribosomal protein S21</fullName>
    </alternativeName>
</protein>
<proteinExistence type="inferred from homology"/>
<reference key="1">
    <citation type="submission" date="2007-11" db="EMBL/GenBank/DDBJ databases">
        <title>Complete sequence of Delftia acidovorans DSM 14801 / SPH-1.</title>
        <authorList>
            <person name="Copeland A."/>
            <person name="Lucas S."/>
            <person name="Lapidus A."/>
            <person name="Barry K."/>
            <person name="Glavina del Rio T."/>
            <person name="Dalin E."/>
            <person name="Tice H."/>
            <person name="Pitluck S."/>
            <person name="Lowry S."/>
            <person name="Clum A."/>
            <person name="Schmutz J."/>
            <person name="Larimer F."/>
            <person name="Land M."/>
            <person name="Hauser L."/>
            <person name="Kyrpides N."/>
            <person name="Kim E."/>
            <person name="Schleheck D."/>
            <person name="Richardson P."/>
        </authorList>
    </citation>
    <scope>NUCLEOTIDE SEQUENCE [LARGE SCALE GENOMIC DNA]</scope>
    <source>
        <strain>DSM 14801 / SPH-1</strain>
    </source>
</reference>
<comment type="similarity">
    <text evidence="1">Belongs to the bacterial ribosomal protein bS21 family.</text>
</comment>
<name>RS21_DELAS</name>
<evidence type="ECO:0000255" key="1">
    <source>
        <dbReference type="HAMAP-Rule" id="MF_00358"/>
    </source>
</evidence>
<evidence type="ECO:0000305" key="2"/>
<gene>
    <name evidence="1" type="primary">rpsU</name>
    <name type="ordered locus">Daci_2363</name>
</gene>
<sequence length="70" mass="8552">MTTIRVKENEPYEVALRRFKRTIEKLGLLTDLRAREFYEKPTSERKRKKAAAVKRHYKRVRSMQLPKKLY</sequence>
<accession>A9BTN3</accession>
<keyword id="KW-1185">Reference proteome</keyword>
<keyword id="KW-0687">Ribonucleoprotein</keyword>
<keyword id="KW-0689">Ribosomal protein</keyword>
<dbReference type="EMBL" id="CP000884">
    <property type="protein sequence ID" value="ABX35001.1"/>
    <property type="molecule type" value="Genomic_DNA"/>
</dbReference>
<dbReference type="RefSeq" id="WP_012204283.1">
    <property type="nucleotide sequence ID" value="NC_010002.1"/>
</dbReference>
<dbReference type="SMR" id="A9BTN3"/>
<dbReference type="STRING" id="398578.Daci_2363"/>
<dbReference type="GeneID" id="24118525"/>
<dbReference type="KEGG" id="dac:Daci_2363"/>
<dbReference type="eggNOG" id="COG0828">
    <property type="taxonomic scope" value="Bacteria"/>
</dbReference>
<dbReference type="HOGENOM" id="CLU_159258_1_2_4"/>
<dbReference type="Proteomes" id="UP000000784">
    <property type="component" value="Chromosome"/>
</dbReference>
<dbReference type="GO" id="GO:1990904">
    <property type="term" value="C:ribonucleoprotein complex"/>
    <property type="evidence" value="ECO:0007669"/>
    <property type="project" value="UniProtKB-KW"/>
</dbReference>
<dbReference type="GO" id="GO:0005840">
    <property type="term" value="C:ribosome"/>
    <property type="evidence" value="ECO:0007669"/>
    <property type="project" value="UniProtKB-KW"/>
</dbReference>
<dbReference type="GO" id="GO:0003735">
    <property type="term" value="F:structural constituent of ribosome"/>
    <property type="evidence" value="ECO:0007669"/>
    <property type="project" value="InterPro"/>
</dbReference>
<dbReference type="GO" id="GO:0006412">
    <property type="term" value="P:translation"/>
    <property type="evidence" value="ECO:0007669"/>
    <property type="project" value="UniProtKB-UniRule"/>
</dbReference>
<dbReference type="Gene3D" id="1.20.5.1150">
    <property type="entry name" value="Ribosomal protein S8"/>
    <property type="match status" value="1"/>
</dbReference>
<dbReference type="HAMAP" id="MF_00358">
    <property type="entry name" value="Ribosomal_bS21"/>
    <property type="match status" value="1"/>
</dbReference>
<dbReference type="InterPro" id="IPR001911">
    <property type="entry name" value="Ribosomal_bS21"/>
</dbReference>
<dbReference type="InterPro" id="IPR018278">
    <property type="entry name" value="Ribosomal_bS21_CS"/>
</dbReference>
<dbReference type="InterPro" id="IPR038380">
    <property type="entry name" value="Ribosomal_bS21_sf"/>
</dbReference>
<dbReference type="NCBIfam" id="TIGR00030">
    <property type="entry name" value="S21p"/>
    <property type="match status" value="1"/>
</dbReference>
<dbReference type="PANTHER" id="PTHR21109">
    <property type="entry name" value="MITOCHONDRIAL 28S RIBOSOMAL PROTEIN S21"/>
    <property type="match status" value="1"/>
</dbReference>
<dbReference type="PANTHER" id="PTHR21109:SF22">
    <property type="entry name" value="SMALL RIBOSOMAL SUBUNIT PROTEIN BS21"/>
    <property type="match status" value="1"/>
</dbReference>
<dbReference type="Pfam" id="PF01165">
    <property type="entry name" value="Ribosomal_S21"/>
    <property type="match status" value="1"/>
</dbReference>
<dbReference type="PRINTS" id="PR00976">
    <property type="entry name" value="RIBOSOMALS21"/>
</dbReference>
<dbReference type="PROSITE" id="PS01181">
    <property type="entry name" value="RIBOSOMAL_S21"/>
    <property type="match status" value="1"/>
</dbReference>
<feature type="chain" id="PRO_1000120607" description="Small ribosomal subunit protein bS21">
    <location>
        <begin position="1"/>
        <end position="70"/>
    </location>
</feature>